<sequence length="349" mass="38800">MSDFQREQRKNEHVEIAMAQSDAMHSDFDKMRFVHHSIPSINVNDIDLTSQTPDLTMTYPVYINAMTGGSEWTKNINEKLAVVARETGLAMAVGSTHAALRNPRMAETFTIARKMNPEGMIFSNVGADVPVEKALEAVELLEAQALQIHVNSPQELVMPEGNREFVTWLDNIASIVSRVSVPVIIKEVGFGMSKELMHDLQQIGVKYVDVSGKGGTNFVDIENERRANKDMDYLSSWGQSTVESLLETTAYQSEISVFASGGLRTPLDAIKSLALGAKATGMSRPFLNQVENNGIAHTVAYVESFIEHMKSIMTMLDAKNIDDLTQKQIVFSPEILSWIEQRNLNIHRG</sequence>
<reference key="1">
    <citation type="journal article" date="2001" name="Proc. Natl. Acad. Sci. U.S.A.">
        <title>An unusual isopentenyl diphosphate isomerase found in the mevalonate pathway gene cluster from Streptomyces sp. strain CL190.</title>
        <authorList>
            <person name="Kaneda K."/>
            <person name="Kuzuyama T."/>
            <person name="Takagi M."/>
            <person name="Hayakawa Y."/>
            <person name="Seto H."/>
        </authorList>
    </citation>
    <scope>NUCLEOTIDE SEQUENCE [GENOMIC DNA]</scope>
    <source>
        <strain>ATCC 25923 / DSM 1104 / JCM 2413 / NBRC 14462 / NCIMB 12702 / NCTC 12981 / Seattle 1945</strain>
    </source>
</reference>
<organism>
    <name type="scientific">Staphylococcus aureus</name>
    <dbReference type="NCBI Taxonomy" id="1280"/>
    <lineage>
        <taxon>Bacteria</taxon>
        <taxon>Bacillati</taxon>
        <taxon>Bacillota</taxon>
        <taxon>Bacilli</taxon>
        <taxon>Bacillales</taxon>
        <taxon>Staphylococcaceae</taxon>
        <taxon>Staphylococcus</taxon>
    </lineage>
</organism>
<gene>
    <name evidence="1" type="primary">fni</name>
</gene>
<name>IDI2_STAAU</name>
<comment type="function">
    <text evidence="1">Involved in the biosynthesis of isoprenoids. Catalyzes the 1,3-allylic rearrangement of the homoallylic substrate isopentenyl (IPP) to its allylic isomer, dimethylallyl diphosphate (DMAPP).</text>
</comment>
<comment type="catalytic activity">
    <reaction evidence="1">
        <text>isopentenyl diphosphate = dimethylallyl diphosphate</text>
        <dbReference type="Rhea" id="RHEA:23284"/>
        <dbReference type="ChEBI" id="CHEBI:57623"/>
        <dbReference type="ChEBI" id="CHEBI:128769"/>
        <dbReference type="EC" id="5.3.3.2"/>
    </reaction>
</comment>
<comment type="cofactor">
    <cofactor evidence="1">
        <name>FMN</name>
        <dbReference type="ChEBI" id="CHEBI:58210"/>
    </cofactor>
</comment>
<comment type="cofactor">
    <cofactor evidence="1">
        <name>NADPH</name>
        <dbReference type="ChEBI" id="CHEBI:57783"/>
    </cofactor>
</comment>
<comment type="cofactor">
    <cofactor evidence="1">
        <name>Mg(2+)</name>
        <dbReference type="ChEBI" id="CHEBI:18420"/>
    </cofactor>
</comment>
<comment type="subunit">
    <text evidence="1">Homooctamer. Dimer of tetramers.</text>
</comment>
<comment type="subcellular location">
    <subcellularLocation>
        <location evidence="1">Cytoplasm</location>
    </subcellularLocation>
</comment>
<comment type="similarity">
    <text evidence="1">Belongs to the IPP isomerase type 2 family.</text>
</comment>
<accession>P58052</accession>
<protein>
    <recommendedName>
        <fullName evidence="1">Isopentenyl-diphosphate delta-isomerase</fullName>
        <shortName evidence="1">IPP isomerase</shortName>
        <ecNumber evidence="1">5.3.3.2</ecNumber>
    </recommendedName>
    <alternativeName>
        <fullName evidence="1">Isopentenyl diphosphate:dimethylallyl diphosphate isomerase</fullName>
    </alternativeName>
    <alternativeName>
        <fullName evidence="1">Isopentenyl pyrophosphate isomerase</fullName>
    </alternativeName>
    <alternativeName>
        <fullName evidence="1">Type 2 isopentenyl diphosphate isomerase</fullName>
        <shortName evidence="1">IDI-2</shortName>
    </alternativeName>
</protein>
<feature type="chain" id="PRO_0000134425" description="Isopentenyl-diphosphate delta-isomerase">
    <location>
        <begin position="1"/>
        <end position="349"/>
    </location>
</feature>
<feature type="binding site" evidence="1">
    <location>
        <begin position="9"/>
        <end position="10"/>
    </location>
    <ligand>
        <name>substrate</name>
    </ligand>
</feature>
<feature type="binding site" evidence="1">
    <location>
        <begin position="65"/>
        <end position="67"/>
    </location>
    <ligand>
        <name>FMN</name>
        <dbReference type="ChEBI" id="CHEBI:58210"/>
    </ligand>
</feature>
<feature type="binding site" evidence="1">
    <location>
        <begin position="95"/>
        <end position="97"/>
    </location>
    <ligand>
        <name>substrate</name>
    </ligand>
</feature>
<feature type="binding site" evidence="1">
    <location>
        <position position="95"/>
    </location>
    <ligand>
        <name>FMN</name>
        <dbReference type="ChEBI" id="CHEBI:58210"/>
    </ligand>
</feature>
<feature type="binding site" evidence="1">
    <location>
        <position position="124"/>
    </location>
    <ligand>
        <name>FMN</name>
        <dbReference type="ChEBI" id="CHEBI:58210"/>
    </ligand>
</feature>
<feature type="binding site" evidence="1">
    <location>
        <position position="154"/>
    </location>
    <ligand>
        <name>substrate</name>
    </ligand>
</feature>
<feature type="binding site" evidence="1">
    <location>
        <position position="155"/>
    </location>
    <ligand>
        <name>Mg(2+)</name>
        <dbReference type="ChEBI" id="CHEBI:18420"/>
    </ligand>
</feature>
<feature type="binding site" evidence="1">
    <location>
        <position position="186"/>
    </location>
    <ligand>
        <name>FMN</name>
        <dbReference type="ChEBI" id="CHEBI:58210"/>
    </ligand>
</feature>
<feature type="binding site" evidence="1">
    <location>
        <position position="211"/>
    </location>
    <ligand>
        <name>FMN</name>
        <dbReference type="ChEBI" id="CHEBI:58210"/>
    </ligand>
</feature>
<feature type="binding site" evidence="1">
    <location>
        <position position="216"/>
    </location>
    <ligand>
        <name>FMN</name>
        <dbReference type="ChEBI" id="CHEBI:58210"/>
    </ligand>
</feature>
<feature type="binding site" evidence="1">
    <location>
        <begin position="262"/>
        <end position="264"/>
    </location>
    <ligand>
        <name>FMN</name>
        <dbReference type="ChEBI" id="CHEBI:58210"/>
    </ligand>
</feature>
<feature type="binding site" evidence="1">
    <location>
        <begin position="283"/>
        <end position="284"/>
    </location>
    <ligand>
        <name>FMN</name>
        <dbReference type="ChEBI" id="CHEBI:58210"/>
    </ligand>
</feature>
<evidence type="ECO:0000255" key="1">
    <source>
        <dbReference type="HAMAP-Rule" id="MF_00354"/>
    </source>
</evidence>
<keyword id="KW-0963">Cytoplasm</keyword>
<keyword id="KW-0285">Flavoprotein</keyword>
<keyword id="KW-0288">FMN</keyword>
<keyword id="KW-0413">Isomerase</keyword>
<keyword id="KW-0414">Isoprene biosynthesis</keyword>
<keyword id="KW-0460">Magnesium</keyword>
<keyword id="KW-0479">Metal-binding</keyword>
<keyword id="KW-0521">NADP</keyword>
<dbReference type="EC" id="5.3.3.2" evidence="1"/>
<dbReference type="EMBL" id="AB047344">
    <property type="protein sequence ID" value="BAB21468.1"/>
    <property type="molecule type" value="Genomic_DNA"/>
</dbReference>
<dbReference type="RefSeq" id="WP_282291412.1">
    <property type="nucleotide sequence ID" value="NZ_CP097091.1"/>
</dbReference>
<dbReference type="SMR" id="P58052"/>
<dbReference type="KEGG" id="ag:BAB21468"/>
<dbReference type="SABIO-RK" id="P58052"/>
<dbReference type="GO" id="GO:0005737">
    <property type="term" value="C:cytoplasm"/>
    <property type="evidence" value="ECO:0007669"/>
    <property type="project" value="UniProtKB-SubCell"/>
</dbReference>
<dbReference type="GO" id="GO:0010181">
    <property type="term" value="F:FMN binding"/>
    <property type="evidence" value="ECO:0007669"/>
    <property type="project" value="UniProtKB-UniRule"/>
</dbReference>
<dbReference type="GO" id="GO:0004452">
    <property type="term" value="F:isopentenyl-diphosphate delta-isomerase activity"/>
    <property type="evidence" value="ECO:0007669"/>
    <property type="project" value="UniProtKB-UniRule"/>
</dbReference>
<dbReference type="GO" id="GO:0000287">
    <property type="term" value="F:magnesium ion binding"/>
    <property type="evidence" value="ECO:0007669"/>
    <property type="project" value="UniProtKB-UniRule"/>
</dbReference>
<dbReference type="GO" id="GO:0070402">
    <property type="term" value="F:NADPH binding"/>
    <property type="evidence" value="ECO:0007669"/>
    <property type="project" value="UniProtKB-UniRule"/>
</dbReference>
<dbReference type="GO" id="GO:0016491">
    <property type="term" value="F:oxidoreductase activity"/>
    <property type="evidence" value="ECO:0007669"/>
    <property type="project" value="InterPro"/>
</dbReference>
<dbReference type="GO" id="GO:0008299">
    <property type="term" value="P:isoprenoid biosynthetic process"/>
    <property type="evidence" value="ECO:0007669"/>
    <property type="project" value="UniProtKB-UniRule"/>
</dbReference>
<dbReference type="CDD" id="cd02811">
    <property type="entry name" value="IDI-2_FMN"/>
    <property type="match status" value="1"/>
</dbReference>
<dbReference type="Gene3D" id="3.20.20.70">
    <property type="entry name" value="Aldolase class I"/>
    <property type="match status" value="1"/>
</dbReference>
<dbReference type="HAMAP" id="MF_00354">
    <property type="entry name" value="Idi_2"/>
    <property type="match status" value="1"/>
</dbReference>
<dbReference type="InterPro" id="IPR013785">
    <property type="entry name" value="Aldolase_TIM"/>
</dbReference>
<dbReference type="InterPro" id="IPR000262">
    <property type="entry name" value="FMN-dep_DH"/>
</dbReference>
<dbReference type="InterPro" id="IPR011179">
    <property type="entry name" value="IPdP_isomerase"/>
</dbReference>
<dbReference type="NCBIfam" id="TIGR02151">
    <property type="entry name" value="IPP_isom_2"/>
    <property type="match status" value="1"/>
</dbReference>
<dbReference type="PANTHER" id="PTHR43665">
    <property type="entry name" value="ISOPENTENYL-DIPHOSPHATE DELTA-ISOMERASE"/>
    <property type="match status" value="1"/>
</dbReference>
<dbReference type="PANTHER" id="PTHR43665:SF1">
    <property type="entry name" value="ISOPENTENYL-DIPHOSPHATE DELTA-ISOMERASE"/>
    <property type="match status" value="1"/>
</dbReference>
<dbReference type="Pfam" id="PF01070">
    <property type="entry name" value="FMN_dh"/>
    <property type="match status" value="1"/>
</dbReference>
<dbReference type="PIRSF" id="PIRSF003314">
    <property type="entry name" value="IPP_isomerase"/>
    <property type="match status" value="1"/>
</dbReference>
<dbReference type="SUPFAM" id="SSF51395">
    <property type="entry name" value="FMN-linked oxidoreductases"/>
    <property type="match status" value="1"/>
</dbReference>
<proteinExistence type="inferred from homology"/>